<keyword id="KW-0066">ATP synthesis</keyword>
<keyword id="KW-0997">Cell inner membrane</keyword>
<keyword id="KW-1003">Cell membrane</keyword>
<keyword id="KW-0138">CF(0)</keyword>
<keyword id="KW-0375">Hydrogen ion transport</keyword>
<keyword id="KW-0406">Ion transport</keyword>
<keyword id="KW-0472">Membrane</keyword>
<keyword id="KW-1185">Reference proteome</keyword>
<keyword id="KW-0812">Transmembrane</keyword>
<keyword id="KW-1133">Transmembrane helix</keyword>
<keyword id="KW-0813">Transport</keyword>
<evidence type="ECO:0000250" key="1"/>
<evidence type="ECO:0000255" key="2">
    <source>
        <dbReference type="HAMAP-Rule" id="MF_01398"/>
    </source>
</evidence>
<protein>
    <recommendedName>
        <fullName evidence="2">ATP synthase subunit b</fullName>
    </recommendedName>
    <alternativeName>
        <fullName evidence="2">ATP synthase F(0) sector subunit b</fullName>
    </alternativeName>
    <alternativeName>
        <fullName evidence="2">ATPase subunit I</fullName>
    </alternativeName>
    <alternativeName>
        <fullName evidence="2">F-type ATPase subunit b</fullName>
        <shortName evidence="2">F-ATPase subunit b</shortName>
    </alternativeName>
</protein>
<comment type="function">
    <text evidence="2">F(1)F(0) ATP synthase produces ATP from ADP in the presence of a proton or sodium gradient. F-type ATPases consist of two structural domains, F(1) containing the extramembraneous catalytic core and F(0) containing the membrane proton channel, linked together by a central stalk and a peripheral stalk. During catalysis, ATP synthesis in the catalytic domain of F(1) is coupled via a rotary mechanism of the central stalk subunits to proton translocation.</text>
</comment>
<comment type="function">
    <text evidence="2">Component of the F(0) channel, it forms part of the peripheral stalk, linking F(1) to F(0).</text>
</comment>
<comment type="subunit">
    <text evidence="1">F-type ATPases have 2 components, F(1) - the catalytic core - and F(0) - the membrane proton channel. F(1) has five subunits: alpha(3), beta(3), gamma(1), delta(1), epsilon(1). F(0) has four main subunits: a(1), b(2) and c(10-14). The alpha and beta chains form an alternating ring which encloses part of the gamma chain. F(1) is attached to F(0) by a central stalk formed by the gamma and epsilon chains, while a peripheral stalk is formed by the delta and b chains (By similarity).</text>
</comment>
<comment type="subcellular location">
    <subcellularLocation>
        <location evidence="2">Cell inner membrane</location>
        <topology evidence="2">Single-pass membrane protein</topology>
    </subcellularLocation>
</comment>
<comment type="similarity">
    <text evidence="2">Belongs to the ATPase B chain family.</text>
</comment>
<sequence length="175" mass="19437">MLTSGIILLEGGLLNPNPGLIFWTALTFLIVLVILRKTAWGPILSMLEERAKSIQSAIDRAHTAKDEAEAILKKNRDLLAKADAEADKIIREAKEVADKLRADLTEKAHDESRKIIASAKEEIEQEKRRALDVLRNEVADMAVKGAEKIIRTTLDADKQKAVVNDMIKEMAASRN</sequence>
<proteinExistence type="inferred from homology"/>
<accession>Q8KGE9</accession>
<feature type="chain" id="PRO_0000368412" description="ATP synthase subunit b">
    <location>
        <begin position="1"/>
        <end position="175"/>
    </location>
</feature>
<feature type="transmembrane region" description="Helical" evidence="2">
    <location>
        <begin position="14"/>
        <end position="34"/>
    </location>
</feature>
<reference key="1">
    <citation type="journal article" date="2002" name="Proc. Natl. Acad. Sci. U.S.A.">
        <title>The complete genome sequence of Chlorobium tepidum TLS, a photosynthetic, anaerobic, green-sulfur bacterium.</title>
        <authorList>
            <person name="Eisen J.A."/>
            <person name="Nelson K.E."/>
            <person name="Paulsen I.T."/>
            <person name="Heidelberg J.F."/>
            <person name="Wu M."/>
            <person name="Dodson R.J."/>
            <person name="DeBoy R.T."/>
            <person name="Gwinn M.L."/>
            <person name="Nelson W.C."/>
            <person name="Haft D.H."/>
            <person name="Hickey E.K."/>
            <person name="Peterson J.D."/>
            <person name="Durkin A.S."/>
            <person name="Kolonay J.F."/>
            <person name="Yang F."/>
            <person name="Holt I.E."/>
            <person name="Umayam L.A."/>
            <person name="Mason T.M."/>
            <person name="Brenner M."/>
            <person name="Shea T.P."/>
            <person name="Parksey D.S."/>
            <person name="Nierman W.C."/>
            <person name="Feldblyum T.V."/>
            <person name="Hansen C.L."/>
            <person name="Craven M.B."/>
            <person name="Radune D."/>
            <person name="Vamathevan J.J."/>
            <person name="Khouri H.M."/>
            <person name="White O."/>
            <person name="Gruber T.M."/>
            <person name="Ketchum K.A."/>
            <person name="Venter J.C."/>
            <person name="Tettelin H."/>
            <person name="Bryant D.A."/>
            <person name="Fraser C.M."/>
        </authorList>
    </citation>
    <scope>NUCLEOTIDE SEQUENCE [LARGE SCALE GENOMIC DNA]</scope>
    <source>
        <strain>ATCC 49652 / DSM 12025 / NBRC 103806 / TLS</strain>
    </source>
</reference>
<organism>
    <name type="scientific">Chlorobaculum tepidum (strain ATCC 49652 / DSM 12025 / NBRC 103806 / TLS)</name>
    <name type="common">Chlorobium tepidum</name>
    <dbReference type="NCBI Taxonomy" id="194439"/>
    <lineage>
        <taxon>Bacteria</taxon>
        <taxon>Pseudomonadati</taxon>
        <taxon>Chlorobiota</taxon>
        <taxon>Chlorobiia</taxon>
        <taxon>Chlorobiales</taxon>
        <taxon>Chlorobiaceae</taxon>
        <taxon>Chlorobaculum</taxon>
    </lineage>
</organism>
<dbReference type="EMBL" id="AE006470">
    <property type="protein sequence ID" value="AAM71267.1"/>
    <property type="molecule type" value="Genomic_DNA"/>
</dbReference>
<dbReference type="RefSeq" id="NP_660925.1">
    <property type="nucleotide sequence ID" value="NC_002932.3"/>
</dbReference>
<dbReference type="RefSeq" id="WP_010931713.1">
    <property type="nucleotide sequence ID" value="NC_002932.3"/>
</dbReference>
<dbReference type="SMR" id="Q8KGE9"/>
<dbReference type="STRING" id="194439.CT0019"/>
<dbReference type="EnsemblBacteria" id="AAM71267">
    <property type="protein sequence ID" value="AAM71267"/>
    <property type="gene ID" value="CT0019"/>
</dbReference>
<dbReference type="KEGG" id="cte:CT0019"/>
<dbReference type="PATRIC" id="fig|194439.7.peg.19"/>
<dbReference type="eggNOG" id="COG0711">
    <property type="taxonomic scope" value="Bacteria"/>
</dbReference>
<dbReference type="HOGENOM" id="CLU_079215_4_1_10"/>
<dbReference type="OrthoDB" id="9795289at2"/>
<dbReference type="Proteomes" id="UP000001007">
    <property type="component" value="Chromosome"/>
</dbReference>
<dbReference type="GO" id="GO:0005886">
    <property type="term" value="C:plasma membrane"/>
    <property type="evidence" value="ECO:0007669"/>
    <property type="project" value="UniProtKB-SubCell"/>
</dbReference>
<dbReference type="GO" id="GO:0045259">
    <property type="term" value="C:proton-transporting ATP synthase complex"/>
    <property type="evidence" value="ECO:0007669"/>
    <property type="project" value="UniProtKB-KW"/>
</dbReference>
<dbReference type="GO" id="GO:0046933">
    <property type="term" value="F:proton-transporting ATP synthase activity, rotational mechanism"/>
    <property type="evidence" value="ECO:0007669"/>
    <property type="project" value="UniProtKB-UniRule"/>
</dbReference>
<dbReference type="GO" id="GO:0046961">
    <property type="term" value="F:proton-transporting ATPase activity, rotational mechanism"/>
    <property type="evidence" value="ECO:0007669"/>
    <property type="project" value="TreeGrafter"/>
</dbReference>
<dbReference type="CDD" id="cd06503">
    <property type="entry name" value="ATP-synt_Fo_b"/>
    <property type="match status" value="1"/>
</dbReference>
<dbReference type="Gene3D" id="1.20.5.620">
    <property type="entry name" value="F1F0 ATP synthase subunit B, membrane domain"/>
    <property type="match status" value="1"/>
</dbReference>
<dbReference type="HAMAP" id="MF_01398">
    <property type="entry name" value="ATP_synth_b_bprime"/>
    <property type="match status" value="1"/>
</dbReference>
<dbReference type="InterPro" id="IPR028987">
    <property type="entry name" value="ATP_synth_B-like_membr_sf"/>
</dbReference>
<dbReference type="InterPro" id="IPR002146">
    <property type="entry name" value="ATP_synth_b/b'su_bac/chlpt"/>
</dbReference>
<dbReference type="InterPro" id="IPR005864">
    <property type="entry name" value="ATP_synth_F0_bsu_bac"/>
</dbReference>
<dbReference type="InterPro" id="IPR050059">
    <property type="entry name" value="ATP_synthase_B_chain"/>
</dbReference>
<dbReference type="NCBIfam" id="TIGR01144">
    <property type="entry name" value="ATP_synt_b"/>
    <property type="match status" value="1"/>
</dbReference>
<dbReference type="NCBIfam" id="NF011042">
    <property type="entry name" value="PRK14472.1"/>
    <property type="match status" value="1"/>
</dbReference>
<dbReference type="PANTHER" id="PTHR33445:SF1">
    <property type="entry name" value="ATP SYNTHASE SUBUNIT B"/>
    <property type="match status" value="1"/>
</dbReference>
<dbReference type="PANTHER" id="PTHR33445">
    <property type="entry name" value="ATP SYNTHASE SUBUNIT B', CHLOROPLASTIC"/>
    <property type="match status" value="1"/>
</dbReference>
<dbReference type="Pfam" id="PF00430">
    <property type="entry name" value="ATP-synt_B"/>
    <property type="match status" value="1"/>
</dbReference>
<dbReference type="SUPFAM" id="SSF81573">
    <property type="entry name" value="F1F0 ATP synthase subunit B, membrane domain"/>
    <property type="match status" value="1"/>
</dbReference>
<name>ATPF_CHLTE</name>
<gene>
    <name evidence="2" type="primary">atpF</name>
    <name type="ordered locus">CT0019</name>
</gene>